<name>RS12_DESHY</name>
<keyword id="KW-0488">Methylation</keyword>
<keyword id="KW-1185">Reference proteome</keyword>
<keyword id="KW-0687">Ribonucleoprotein</keyword>
<keyword id="KW-0689">Ribosomal protein</keyword>
<keyword id="KW-0694">RNA-binding</keyword>
<keyword id="KW-0699">rRNA-binding</keyword>
<keyword id="KW-0820">tRNA-binding</keyword>
<reference key="1">
    <citation type="journal article" date="2006" name="J. Bacteriol.">
        <title>Complete genome sequence of the dehalorespiring bacterium Desulfitobacterium hafniense Y51 and comparison with Dehalococcoides ethenogenes 195.</title>
        <authorList>
            <person name="Nonaka H."/>
            <person name="Keresztes G."/>
            <person name="Shinoda Y."/>
            <person name="Ikenaga Y."/>
            <person name="Abe M."/>
            <person name="Naito K."/>
            <person name="Inatomi K."/>
            <person name="Furukawa K."/>
            <person name="Inui M."/>
            <person name="Yukawa H."/>
        </authorList>
    </citation>
    <scope>NUCLEOTIDE SEQUENCE [LARGE SCALE GENOMIC DNA]</scope>
    <source>
        <strain>Y51</strain>
    </source>
</reference>
<sequence length="140" mass="15550">MPTINQLIRNGRSKIAKKSTAPAMQWGYNSLQRKQFASGGSPQKRGVCTRVYTTTPKKPNSALRKVARVRLTNTIEVSSYIPGIGHNLQEHSVVLVRGGRVKDLPGVRYHIVRGALDTQGVQKRMQARSKYGAKRPKKGK</sequence>
<organism>
    <name type="scientific">Desulfitobacterium hafniense (strain Y51)</name>
    <dbReference type="NCBI Taxonomy" id="138119"/>
    <lineage>
        <taxon>Bacteria</taxon>
        <taxon>Bacillati</taxon>
        <taxon>Bacillota</taxon>
        <taxon>Clostridia</taxon>
        <taxon>Eubacteriales</taxon>
        <taxon>Desulfitobacteriaceae</taxon>
        <taxon>Desulfitobacterium</taxon>
    </lineage>
</organism>
<dbReference type="EMBL" id="AP008230">
    <property type="protein sequence ID" value="BAE82255.1"/>
    <property type="molecule type" value="Genomic_DNA"/>
</dbReference>
<dbReference type="RefSeq" id="WP_011459097.1">
    <property type="nucleotide sequence ID" value="NC_007907.1"/>
</dbReference>
<dbReference type="SMR" id="Q250N7"/>
<dbReference type="STRING" id="138119.DSY0466"/>
<dbReference type="KEGG" id="dsy:DSY0466"/>
<dbReference type="eggNOG" id="COG0048">
    <property type="taxonomic scope" value="Bacteria"/>
</dbReference>
<dbReference type="HOGENOM" id="CLU_104295_1_2_9"/>
<dbReference type="Proteomes" id="UP000001946">
    <property type="component" value="Chromosome"/>
</dbReference>
<dbReference type="GO" id="GO:0015935">
    <property type="term" value="C:small ribosomal subunit"/>
    <property type="evidence" value="ECO:0007669"/>
    <property type="project" value="InterPro"/>
</dbReference>
<dbReference type="GO" id="GO:0019843">
    <property type="term" value="F:rRNA binding"/>
    <property type="evidence" value="ECO:0007669"/>
    <property type="project" value="UniProtKB-UniRule"/>
</dbReference>
<dbReference type="GO" id="GO:0003735">
    <property type="term" value="F:structural constituent of ribosome"/>
    <property type="evidence" value="ECO:0007669"/>
    <property type="project" value="InterPro"/>
</dbReference>
<dbReference type="GO" id="GO:0000049">
    <property type="term" value="F:tRNA binding"/>
    <property type="evidence" value="ECO:0007669"/>
    <property type="project" value="UniProtKB-UniRule"/>
</dbReference>
<dbReference type="GO" id="GO:0006412">
    <property type="term" value="P:translation"/>
    <property type="evidence" value="ECO:0007669"/>
    <property type="project" value="UniProtKB-UniRule"/>
</dbReference>
<dbReference type="CDD" id="cd03368">
    <property type="entry name" value="Ribosomal_S12"/>
    <property type="match status" value="1"/>
</dbReference>
<dbReference type="FunFam" id="2.40.50.140:FF:000001">
    <property type="entry name" value="30S ribosomal protein S12"/>
    <property type="match status" value="1"/>
</dbReference>
<dbReference type="Gene3D" id="2.40.50.140">
    <property type="entry name" value="Nucleic acid-binding proteins"/>
    <property type="match status" value="1"/>
</dbReference>
<dbReference type="HAMAP" id="MF_00403_B">
    <property type="entry name" value="Ribosomal_uS12_B"/>
    <property type="match status" value="1"/>
</dbReference>
<dbReference type="InterPro" id="IPR012340">
    <property type="entry name" value="NA-bd_OB-fold"/>
</dbReference>
<dbReference type="InterPro" id="IPR006032">
    <property type="entry name" value="Ribosomal_uS12"/>
</dbReference>
<dbReference type="InterPro" id="IPR005679">
    <property type="entry name" value="Ribosomal_uS12_bac"/>
</dbReference>
<dbReference type="NCBIfam" id="TIGR00981">
    <property type="entry name" value="rpsL_bact"/>
    <property type="match status" value="1"/>
</dbReference>
<dbReference type="PANTHER" id="PTHR11652">
    <property type="entry name" value="30S RIBOSOMAL PROTEIN S12 FAMILY MEMBER"/>
    <property type="match status" value="1"/>
</dbReference>
<dbReference type="Pfam" id="PF00164">
    <property type="entry name" value="Ribosom_S12_S23"/>
    <property type="match status" value="1"/>
</dbReference>
<dbReference type="PRINTS" id="PR01034">
    <property type="entry name" value="RIBOSOMALS12"/>
</dbReference>
<dbReference type="SUPFAM" id="SSF50249">
    <property type="entry name" value="Nucleic acid-binding proteins"/>
    <property type="match status" value="1"/>
</dbReference>
<dbReference type="PROSITE" id="PS00055">
    <property type="entry name" value="RIBOSOMAL_S12"/>
    <property type="match status" value="1"/>
</dbReference>
<feature type="chain" id="PRO_0000263554" description="Small ribosomal subunit protein uS12">
    <location>
        <begin position="1"/>
        <end position="140"/>
    </location>
</feature>
<feature type="region of interest" description="Disordered" evidence="3">
    <location>
        <begin position="120"/>
        <end position="140"/>
    </location>
</feature>
<feature type="compositionally biased region" description="Basic residues" evidence="3">
    <location>
        <begin position="125"/>
        <end position="140"/>
    </location>
</feature>
<feature type="modified residue" description="3-methylthioaspartic acid" evidence="1">
    <location>
        <position position="103"/>
    </location>
</feature>
<protein>
    <recommendedName>
        <fullName evidence="2">Small ribosomal subunit protein uS12</fullName>
    </recommendedName>
    <alternativeName>
        <fullName evidence="4">30S ribosomal protein S12</fullName>
    </alternativeName>
</protein>
<gene>
    <name evidence="2" type="primary">rpsL</name>
    <name type="ordered locus">DSY0466</name>
</gene>
<evidence type="ECO:0000250" key="1"/>
<evidence type="ECO:0000255" key="2">
    <source>
        <dbReference type="HAMAP-Rule" id="MF_00403"/>
    </source>
</evidence>
<evidence type="ECO:0000256" key="3">
    <source>
        <dbReference type="SAM" id="MobiDB-lite"/>
    </source>
</evidence>
<evidence type="ECO:0000305" key="4"/>
<proteinExistence type="inferred from homology"/>
<comment type="function">
    <text evidence="2">With S4 and S5 plays an important role in translational accuracy.</text>
</comment>
<comment type="function">
    <text evidence="2">Interacts with and stabilizes bases of the 16S rRNA that are involved in tRNA selection in the A site and with the mRNA backbone. Located at the interface of the 30S and 50S subunits, it traverses the body of the 30S subunit contacting proteins on the other side and probably holding the rRNA structure together. The combined cluster of proteins S8, S12 and S17 appears to hold together the shoulder and platform of the 30S subunit.</text>
</comment>
<comment type="subunit">
    <text evidence="2">Part of the 30S ribosomal subunit. Contacts proteins S8 and S17. May interact with IF1 in the 30S initiation complex.</text>
</comment>
<comment type="similarity">
    <text evidence="2">Belongs to the universal ribosomal protein uS12 family.</text>
</comment>
<accession>Q250N7</accession>